<name>EF1A_METTH</name>
<gene>
    <name evidence="2" type="primary">tuf</name>
    <name type="ordered locus">MTH_1058</name>
</gene>
<sequence>MAKEKEHMNLAFIGHVDHGKSTLVGHLLLQAGAIAEQQLAEGEDKFRFVMDRLSEERERGVTIDLAHAKFETDKYEFTIVDCPGHRDFVKNMITGASQADAAVLVVAVDDGVMPQTKEHVFLSRTLGINQLIVAINKMDLVNYDEEKFNALKDEVAALIKTVGYKPSDVEFIPLSAFEGDNITSKSENTPWYKGKTLVEALDDLEAPEKPVDLPLRIPIQDVYSITGVGTVPVGRVETGVLKKGENVIFEPAGVSGEVKSIEMHHEMIEQAEPGDNIGFNVRGVGKNDIRRGDVAGHLDNPPKVAKEFTAQIVVLQHPGVITVGYTPVFHCHTAQVACTFLELVQKMNPATGQVEEENPDFLKTGNAAVVKVKPTKPLVIEKIKDIPHMGRFAIRDMGQTVAAGMCIDLVPAK</sequence>
<organism>
    <name type="scientific">Methanothermobacter thermautotrophicus (strain ATCC 29096 / DSM 1053 / JCM 10044 / NBRC 100330 / Delta H)</name>
    <name type="common">Methanobacterium thermoautotrophicum</name>
    <dbReference type="NCBI Taxonomy" id="187420"/>
    <lineage>
        <taxon>Archaea</taxon>
        <taxon>Methanobacteriati</taxon>
        <taxon>Methanobacteriota</taxon>
        <taxon>Methanomada group</taxon>
        <taxon>Methanobacteria</taxon>
        <taxon>Methanobacteriales</taxon>
        <taxon>Methanobacteriaceae</taxon>
        <taxon>Methanothermobacter</taxon>
    </lineage>
</organism>
<dbReference type="EC" id="3.6.5.3" evidence="2"/>
<dbReference type="EMBL" id="AE000666">
    <property type="protein sequence ID" value="AAB85549.1"/>
    <property type="molecule type" value="Genomic_DNA"/>
</dbReference>
<dbReference type="PIR" id="F69007">
    <property type="entry name" value="F69007"/>
</dbReference>
<dbReference type="RefSeq" id="WP_010876684.1">
    <property type="nucleotide sequence ID" value="NC_000916.1"/>
</dbReference>
<dbReference type="SMR" id="O27132"/>
<dbReference type="FunCoup" id="O27132">
    <property type="interactions" value="116"/>
</dbReference>
<dbReference type="IntAct" id="O27132">
    <property type="interactions" value="1"/>
</dbReference>
<dbReference type="MINT" id="O27132"/>
<dbReference type="STRING" id="187420.MTH_1058"/>
<dbReference type="PaxDb" id="187420-MTH_1058"/>
<dbReference type="EnsemblBacteria" id="AAB85549">
    <property type="protein sequence ID" value="AAB85549"/>
    <property type="gene ID" value="MTH_1058"/>
</dbReference>
<dbReference type="GeneID" id="77403464"/>
<dbReference type="KEGG" id="mth:MTH_1058"/>
<dbReference type="PATRIC" id="fig|187420.15.peg.1037"/>
<dbReference type="HOGENOM" id="CLU_007265_3_5_2"/>
<dbReference type="InParanoid" id="O27132"/>
<dbReference type="Proteomes" id="UP000005223">
    <property type="component" value="Chromosome"/>
</dbReference>
<dbReference type="GO" id="GO:0005737">
    <property type="term" value="C:cytoplasm"/>
    <property type="evidence" value="ECO:0007669"/>
    <property type="project" value="UniProtKB-SubCell"/>
</dbReference>
<dbReference type="GO" id="GO:0005525">
    <property type="term" value="F:GTP binding"/>
    <property type="evidence" value="ECO:0007669"/>
    <property type="project" value="UniProtKB-UniRule"/>
</dbReference>
<dbReference type="GO" id="GO:0003924">
    <property type="term" value="F:GTPase activity"/>
    <property type="evidence" value="ECO:0007669"/>
    <property type="project" value="InterPro"/>
</dbReference>
<dbReference type="GO" id="GO:0003746">
    <property type="term" value="F:translation elongation factor activity"/>
    <property type="evidence" value="ECO:0007669"/>
    <property type="project" value="UniProtKB-UniRule"/>
</dbReference>
<dbReference type="CDD" id="cd01883">
    <property type="entry name" value="EF1_alpha"/>
    <property type="match status" value="1"/>
</dbReference>
<dbReference type="CDD" id="cd03693">
    <property type="entry name" value="EF1_alpha_II"/>
    <property type="match status" value="1"/>
</dbReference>
<dbReference type="CDD" id="cd03705">
    <property type="entry name" value="EF1_alpha_III"/>
    <property type="match status" value="1"/>
</dbReference>
<dbReference type="FunFam" id="2.40.30.10:FF:000003">
    <property type="entry name" value="Elongation factor 1-alpha"/>
    <property type="match status" value="1"/>
</dbReference>
<dbReference type="FunFam" id="2.40.30.10:FF:000005">
    <property type="entry name" value="Elongation factor 1-alpha"/>
    <property type="match status" value="1"/>
</dbReference>
<dbReference type="Gene3D" id="3.40.50.300">
    <property type="entry name" value="P-loop containing nucleotide triphosphate hydrolases"/>
    <property type="match status" value="1"/>
</dbReference>
<dbReference type="Gene3D" id="2.40.30.10">
    <property type="entry name" value="Translation factors"/>
    <property type="match status" value="2"/>
</dbReference>
<dbReference type="HAMAP" id="MF_00118_A">
    <property type="entry name" value="EF_Tu_A"/>
    <property type="match status" value="1"/>
</dbReference>
<dbReference type="InterPro" id="IPR004161">
    <property type="entry name" value="EFTu-like_2"/>
</dbReference>
<dbReference type="InterPro" id="IPR031157">
    <property type="entry name" value="G_TR_CS"/>
</dbReference>
<dbReference type="InterPro" id="IPR054696">
    <property type="entry name" value="GTP-eEF1A_C"/>
</dbReference>
<dbReference type="InterPro" id="IPR027417">
    <property type="entry name" value="P-loop_NTPase"/>
</dbReference>
<dbReference type="InterPro" id="IPR005225">
    <property type="entry name" value="Small_GTP-bd"/>
</dbReference>
<dbReference type="InterPro" id="IPR000795">
    <property type="entry name" value="T_Tr_GTP-bd_dom"/>
</dbReference>
<dbReference type="InterPro" id="IPR050100">
    <property type="entry name" value="TRAFAC_GTPase_members"/>
</dbReference>
<dbReference type="InterPro" id="IPR009000">
    <property type="entry name" value="Transl_B-barrel_sf"/>
</dbReference>
<dbReference type="InterPro" id="IPR009001">
    <property type="entry name" value="Transl_elong_EF1A/Init_IF2_C"/>
</dbReference>
<dbReference type="InterPro" id="IPR004539">
    <property type="entry name" value="Transl_elong_EF1A_euk/arc"/>
</dbReference>
<dbReference type="NCBIfam" id="TIGR00483">
    <property type="entry name" value="EF-1_alpha"/>
    <property type="match status" value="1"/>
</dbReference>
<dbReference type="NCBIfam" id="NF008969">
    <property type="entry name" value="PRK12317.1"/>
    <property type="match status" value="1"/>
</dbReference>
<dbReference type="NCBIfam" id="TIGR00231">
    <property type="entry name" value="small_GTP"/>
    <property type="match status" value="1"/>
</dbReference>
<dbReference type="PANTHER" id="PTHR23115">
    <property type="entry name" value="TRANSLATION FACTOR"/>
    <property type="match status" value="1"/>
</dbReference>
<dbReference type="Pfam" id="PF22594">
    <property type="entry name" value="GTP-eEF1A_C"/>
    <property type="match status" value="1"/>
</dbReference>
<dbReference type="Pfam" id="PF00009">
    <property type="entry name" value="GTP_EFTU"/>
    <property type="match status" value="1"/>
</dbReference>
<dbReference type="Pfam" id="PF03144">
    <property type="entry name" value="GTP_EFTU_D2"/>
    <property type="match status" value="1"/>
</dbReference>
<dbReference type="PRINTS" id="PR00315">
    <property type="entry name" value="ELONGATNFCT"/>
</dbReference>
<dbReference type="SUPFAM" id="SSF50465">
    <property type="entry name" value="EF-Tu/eEF-1alpha/eIF2-gamma C-terminal domain"/>
    <property type="match status" value="1"/>
</dbReference>
<dbReference type="SUPFAM" id="SSF52540">
    <property type="entry name" value="P-loop containing nucleoside triphosphate hydrolases"/>
    <property type="match status" value="1"/>
</dbReference>
<dbReference type="SUPFAM" id="SSF50447">
    <property type="entry name" value="Translation proteins"/>
    <property type="match status" value="1"/>
</dbReference>
<dbReference type="PROSITE" id="PS00301">
    <property type="entry name" value="G_TR_1"/>
    <property type="match status" value="1"/>
</dbReference>
<dbReference type="PROSITE" id="PS51722">
    <property type="entry name" value="G_TR_2"/>
    <property type="match status" value="1"/>
</dbReference>
<reference key="1">
    <citation type="journal article" date="1997" name="J. Bacteriol.">
        <title>Complete genome sequence of Methanobacterium thermoautotrophicum deltaH: functional analysis and comparative genomics.</title>
        <authorList>
            <person name="Smith D.R."/>
            <person name="Doucette-Stamm L.A."/>
            <person name="Deloughery C."/>
            <person name="Lee H.-M."/>
            <person name="Dubois J."/>
            <person name="Aldredge T."/>
            <person name="Bashirzadeh R."/>
            <person name="Blakely D."/>
            <person name="Cook R."/>
            <person name="Gilbert K."/>
            <person name="Harrison D."/>
            <person name="Hoang L."/>
            <person name="Keagle P."/>
            <person name="Lumm W."/>
            <person name="Pothier B."/>
            <person name="Qiu D."/>
            <person name="Spadafora R."/>
            <person name="Vicare R."/>
            <person name="Wang Y."/>
            <person name="Wierzbowski J."/>
            <person name="Gibson R."/>
            <person name="Jiwani N."/>
            <person name="Caruso A."/>
            <person name="Bush D."/>
            <person name="Safer H."/>
            <person name="Patwell D."/>
            <person name="Prabhakar S."/>
            <person name="McDougall S."/>
            <person name="Shimer G."/>
            <person name="Goyal A."/>
            <person name="Pietrovski S."/>
            <person name="Church G.M."/>
            <person name="Daniels C.J."/>
            <person name="Mao J.-I."/>
            <person name="Rice P."/>
            <person name="Noelling J."/>
            <person name="Reeve J.N."/>
        </authorList>
    </citation>
    <scope>NUCLEOTIDE SEQUENCE [LARGE SCALE GENOMIC DNA]</scope>
    <source>
        <strain>ATCC 29096 / DSM 1053 / JCM 10044 / NBRC 100330 / Delta H</strain>
    </source>
</reference>
<protein>
    <recommendedName>
        <fullName evidence="2">Elongation factor 1-alpha</fullName>
        <shortName evidence="2">EF-1-alpha</shortName>
        <ecNumber evidence="2">3.6.5.3</ecNumber>
    </recommendedName>
    <alternativeName>
        <fullName evidence="2">Elongation factor Tu</fullName>
        <shortName evidence="2">EF-Tu</shortName>
    </alternativeName>
</protein>
<evidence type="ECO:0000250" key="1"/>
<evidence type="ECO:0000255" key="2">
    <source>
        <dbReference type="HAMAP-Rule" id="MF_00118"/>
    </source>
</evidence>
<comment type="function">
    <text evidence="2">GTP hydrolase that promotes the GTP-dependent binding of aminoacyl-tRNA to the A-site of ribosomes during protein biosynthesis.</text>
</comment>
<comment type="catalytic activity">
    <reaction evidence="2">
        <text>GTP + H2O = GDP + phosphate + H(+)</text>
        <dbReference type="Rhea" id="RHEA:19669"/>
        <dbReference type="ChEBI" id="CHEBI:15377"/>
        <dbReference type="ChEBI" id="CHEBI:15378"/>
        <dbReference type="ChEBI" id="CHEBI:37565"/>
        <dbReference type="ChEBI" id="CHEBI:43474"/>
        <dbReference type="ChEBI" id="CHEBI:58189"/>
        <dbReference type="EC" id="3.6.5.3"/>
    </reaction>
    <physiologicalReaction direction="left-to-right" evidence="2">
        <dbReference type="Rhea" id="RHEA:19670"/>
    </physiologicalReaction>
</comment>
<comment type="interaction">
    <interactant intactId="EBI-7963138">
        <id>O27132</id>
    </interactant>
    <interactant intactId="EBI-7963108">
        <id>O27552</id>
        <label>leuS</label>
    </interactant>
    <organismsDiffer>false</organismsDiffer>
    <experiments>3</experiments>
</comment>
<comment type="subcellular location">
    <subcellularLocation>
        <location evidence="2">Cytoplasm</location>
    </subcellularLocation>
</comment>
<comment type="similarity">
    <text evidence="2">Belongs to the TRAFAC class translation factor GTPase superfamily. Classic translation factor GTPase family. EF-Tu/EF-1A subfamily.</text>
</comment>
<feature type="chain" id="PRO_0000090985" description="Elongation factor 1-alpha">
    <location>
        <begin position="1"/>
        <end position="413"/>
    </location>
</feature>
<feature type="domain" description="tr-type G">
    <location>
        <begin position="5"/>
        <end position="211"/>
    </location>
</feature>
<feature type="region of interest" description="G1" evidence="1">
    <location>
        <begin position="14"/>
        <end position="21"/>
    </location>
</feature>
<feature type="region of interest" description="G2" evidence="1">
    <location>
        <begin position="60"/>
        <end position="64"/>
    </location>
</feature>
<feature type="region of interest" description="G3" evidence="1">
    <location>
        <begin position="81"/>
        <end position="84"/>
    </location>
</feature>
<feature type="region of interest" description="G4" evidence="1">
    <location>
        <begin position="136"/>
        <end position="139"/>
    </location>
</feature>
<feature type="region of interest" description="G5" evidence="1">
    <location>
        <begin position="175"/>
        <end position="177"/>
    </location>
</feature>
<feature type="binding site" evidence="2">
    <location>
        <begin position="14"/>
        <end position="21"/>
    </location>
    <ligand>
        <name>GTP</name>
        <dbReference type="ChEBI" id="CHEBI:37565"/>
    </ligand>
</feature>
<feature type="binding site" evidence="2">
    <location>
        <position position="21"/>
    </location>
    <ligand>
        <name>Mg(2+)</name>
        <dbReference type="ChEBI" id="CHEBI:18420"/>
    </ligand>
</feature>
<feature type="binding site" evidence="2">
    <location>
        <begin position="81"/>
        <end position="85"/>
    </location>
    <ligand>
        <name>GTP</name>
        <dbReference type="ChEBI" id="CHEBI:37565"/>
    </ligand>
</feature>
<feature type="binding site" evidence="2">
    <location>
        <begin position="136"/>
        <end position="139"/>
    </location>
    <ligand>
        <name>GTP</name>
        <dbReference type="ChEBI" id="CHEBI:37565"/>
    </ligand>
</feature>
<accession>O27132</accession>
<keyword id="KW-0963">Cytoplasm</keyword>
<keyword id="KW-0251">Elongation factor</keyword>
<keyword id="KW-0342">GTP-binding</keyword>
<keyword id="KW-0378">Hydrolase</keyword>
<keyword id="KW-0460">Magnesium</keyword>
<keyword id="KW-0479">Metal-binding</keyword>
<keyword id="KW-0547">Nucleotide-binding</keyword>
<keyword id="KW-0648">Protein biosynthesis</keyword>
<keyword id="KW-1185">Reference proteome</keyword>
<proteinExistence type="evidence at protein level"/>